<dbReference type="EMBL" id="M86654">
    <property type="protein sequence ID" value="AAA83018.1"/>
    <property type="molecule type" value="mRNA"/>
</dbReference>
<dbReference type="PIR" id="B44841">
    <property type="entry name" value="B44841"/>
</dbReference>
<dbReference type="RefSeq" id="NP_001081414.1">
    <property type="nucleotide sequence ID" value="NM_001087945.1"/>
</dbReference>
<dbReference type="SMR" id="P35616"/>
<dbReference type="GeneID" id="397822"/>
<dbReference type="KEGG" id="xla:397822"/>
<dbReference type="AGR" id="Xenbase:XB-GENE-866125"/>
<dbReference type="CTD" id="397822"/>
<dbReference type="Xenbase" id="XB-GENE-866125">
    <property type="gene designation" value="nefl.L"/>
</dbReference>
<dbReference type="OrthoDB" id="2441647at2759"/>
<dbReference type="Proteomes" id="UP000186698">
    <property type="component" value="Chromosome 3L"/>
</dbReference>
<dbReference type="Bgee" id="397822">
    <property type="expression patterns" value="Expressed in brain and 14 other cell types or tissues"/>
</dbReference>
<dbReference type="GO" id="GO:0030424">
    <property type="term" value="C:axon"/>
    <property type="evidence" value="ECO:0000318"/>
    <property type="project" value="GO_Central"/>
</dbReference>
<dbReference type="GO" id="GO:0005737">
    <property type="term" value="C:cytoplasm"/>
    <property type="evidence" value="ECO:0007669"/>
    <property type="project" value="UniProtKB-KW"/>
</dbReference>
<dbReference type="GO" id="GO:0005882">
    <property type="term" value="C:intermediate filament"/>
    <property type="evidence" value="ECO:0000318"/>
    <property type="project" value="GO_Central"/>
</dbReference>
<dbReference type="GO" id="GO:0099160">
    <property type="term" value="C:postsynaptic intermediate filament cytoskeleton"/>
    <property type="evidence" value="ECO:0000318"/>
    <property type="project" value="GO_Central"/>
</dbReference>
<dbReference type="GO" id="GO:0099184">
    <property type="term" value="F:structural constituent of postsynaptic intermediate filament cytoskeleton"/>
    <property type="evidence" value="ECO:0000318"/>
    <property type="project" value="GO_Central"/>
</dbReference>
<dbReference type="GO" id="GO:0033693">
    <property type="term" value="P:neurofilament bundle assembly"/>
    <property type="evidence" value="ECO:0000318"/>
    <property type="project" value="GO_Central"/>
</dbReference>
<dbReference type="FunFam" id="1.20.5.1160:FF:000001">
    <property type="entry name" value="Keratin type II"/>
    <property type="match status" value="1"/>
</dbReference>
<dbReference type="FunFam" id="1.20.5.170:FF:000002">
    <property type="entry name" value="Type I keratin KA11"/>
    <property type="match status" value="1"/>
</dbReference>
<dbReference type="FunFam" id="1.20.5.500:FF:000001">
    <property type="entry name" value="Type II keratin 23"/>
    <property type="match status" value="1"/>
</dbReference>
<dbReference type="Gene3D" id="1.20.5.170">
    <property type="match status" value="1"/>
</dbReference>
<dbReference type="Gene3D" id="1.20.5.500">
    <property type="entry name" value="Single helix bin"/>
    <property type="match status" value="1"/>
</dbReference>
<dbReference type="Gene3D" id="1.20.5.1160">
    <property type="entry name" value="Vasodilator-stimulated phosphoprotein"/>
    <property type="match status" value="1"/>
</dbReference>
<dbReference type="InterPro" id="IPR018039">
    <property type="entry name" value="IF_conserved"/>
</dbReference>
<dbReference type="InterPro" id="IPR039008">
    <property type="entry name" value="IF_rod_dom"/>
</dbReference>
<dbReference type="InterPro" id="IPR006821">
    <property type="entry name" value="Intermed_filament_DNA-bd"/>
</dbReference>
<dbReference type="InterPro" id="IPR050405">
    <property type="entry name" value="Intermediate_filament"/>
</dbReference>
<dbReference type="PANTHER" id="PTHR45652">
    <property type="entry name" value="GLIAL FIBRILLARY ACIDIC PROTEIN"/>
    <property type="match status" value="1"/>
</dbReference>
<dbReference type="PANTHER" id="PTHR45652:SF8">
    <property type="entry name" value="NEUROFILAMENT LIGHT POLYPEPTIDE"/>
    <property type="match status" value="1"/>
</dbReference>
<dbReference type="Pfam" id="PF00038">
    <property type="entry name" value="Filament"/>
    <property type="match status" value="1"/>
</dbReference>
<dbReference type="Pfam" id="PF04732">
    <property type="entry name" value="Filament_head"/>
    <property type="match status" value="1"/>
</dbReference>
<dbReference type="SMART" id="SM01391">
    <property type="entry name" value="Filament"/>
    <property type="match status" value="1"/>
</dbReference>
<dbReference type="SUPFAM" id="SSF64593">
    <property type="entry name" value="Intermediate filament protein, coiled coil region"/>
    <property type="match status" value="2"/>
</dbReference>
<dbReference type="PROSITE" id="PS00226">
    <property type="entry name" value="IF_ROD_1"/>
    <property type="match status" value="1"/>
</dbReference>
<dbReference type="PROSITE" id="PS51842">
    <property type="entry name" value="IF_ROD_2"/>
    <property type="match status" value="1"/>
</dbReference>
<reference key="1">
    <citation type="journal article" date="1992" name="J. Neurosci.">
        <title>Identification and developmental expression of a novel low molecular weight neuronal intermediate filament protein expressed in Xenopus laevis.</title>
        <authorList>
            <person name="Charnas L.R."/>
            <person name="Szaro B.G."/>
            <person name="Gainer H."/>
        </authorList>
    </citation>
    <scope>NUCLEOTIDE SEQUENCE [MRNA]</scope>
    <source>
        <tissue>Brain</tissue>
    </source>
</reference>
<gene>
    <name type="primary">nefl</name>
</gene>
<protein>
    <recommendedName>
        <fullName>Neurofilament light polypeptide</fullName>
        <shortName>NF-L</shortName>
    </recommendedName>
    <alternativeName>
        <fullName>Neurofilament triplet L protein</fullName>
    </alternativeName>
</protein>
<sequence length="544" mass="61862">MSSYSYDPYYTPYKRRVVESSPRVHIRSSYVSPSRTTYSPLVSTTMRRSYATSSSSSFLPSVDTMDLSQVAAISSDLKIVRTQEKVQLQDLNDRFANFIERVHELEQRNKVLEAELLLLRQKHNEPSRLRDMYEKEVRDVRLAQEEASGDRQTLRNERERLEDALRVLQGRYEEEAMSREDSEARLLDVRKEADMAALARVELEKRMDSLLDEIAFLKKVHEEELSQLQSQVQYAQVSLEVEVAKPDLSSALRDIRGQYEKLAAKNMQSAEEWFKSRFTVLTQSAARNTDAVRAAKDEMSESRRMLSAKGLEIEACRGVNEALQRQIQELEDKQSGEIAGMQDAINKLEEELRNTKSEMARYLKEYQDLLNVKMALDIEIAAYRKLLEGEETRLSFSGVGAITSGYTQSAPVFGRSAYSLQSSSYMTSRAFPTYYSSHVQEEQLDIEETIESSRAEEAKAEAPEEEEEEAAEEEGEGGEEAEEEGEEGEEAKEEEAEEEGGQEKEEEGEEGEGEAEAEGDGEEEGESKGDEAAEEESEKKEKKK</sequence>
<accession>P35616</accession>
<keyword id="KW-0007">Acetylation</keyword>
<keyword id="KW-0966">Cell projection</keyword>
<keyword id="KW-0175">Coiled coil</keyword>
<keyword id="KW-0963">Cytoplasm</keyword>
<keyword id="KW-0206">Cytoskeleton</keyword>
<keyword id="KW-0403">Intermediate filament</keyword>
<keyword id="KW-1185">Reference proteome</keyword>
<proteinExistence type="evidence at transcript level"/>
<feature type="initiator methionine" description="Removed" evidence="1">
    <location>
        <position position="1"/>
    </location>
</feature>
<feature type="chain" id="PRO_0000063792" description="Neurofilament light polypeptide">
    <location>
        <begin position="2"/>
        <end position="544"/>
    </location>
</feature>
<feature type="domain" description="IF rod" evidence="4">
    <location>
        <begin position="84"/>
        <end position="394"/>
    </location>
</feature>
<feature type="region of interest" description="Head">
    <location>
        <begin position="2"/>
        <end position="87"/>
    </location>
</feature>
<feature type="region of interest" description="Coil 1A">
    <location>
        <begin position="88"/>
        <end position="119"/>
    </location>
</feature>
<feature type="region of interest" description="Linker 1">
    <location>
        <begin position="120"/>
        <end position="132"/>
    </location>
</feature>
<feature type="region of interest" description="Coil 1B">
    <location>
        <begin position="133"/>
        <end position="228"/>
    </location>
</feature>
<feature type="region of interest" description="Linker 12">
    <location>
        <begin position="229"/>
        <end position="246"/>
    </location>
</feature>
<feature type="region of interest" description="Coil 2A">
    <location>
        <begin position="247"/>
        <end position="265"/>
    </location>
</feature>
<feature type="region of interest" description="Linker 2">
    <location>
        <begin position="266"/>
        <end position="274"/>
    </location>
</feature>
<feature type="region of interest" description="Coil 2B">
    <location>
        <begin position="275"/>
        <end position="390"/>
    </location>
</feature>
<feature type="region of interest" description="Tail">
    <location>
        <begin position="391"/>
        <end position="544"/>
    </location>
</feature>
<feature type="region of interest" description="Tail, subdomain A">
    <location>
        <begin position="391"/>
        <end position="435"/>
    </location>
</feature>
<feature type="region of interest" description="Tail, subdomain B (acidic)">
    <location>
        <begin position="436"/>
        <end position="544"/>
    </location>
</feature>
<feature type="region of interest" description="Disordered" evidence="5">
    <location>
        <begin position="450"/>
        <end position="544"/>
    </location>
</feature>
<feature type="compositionally biased region" description="Basic and acidic residues" evidence="5">
    <location>
        <begin position="451"/>
        <end position="462"/>
    </location>
</feature>
<feature type="compositionally biased region" description="Acidic residues" evidence="5">
    <location>
        <begin position="463"/>
        <end position="525"/>
    </location>
</feature>
<feature type="compositionally biased region" description="Basic and acidic residues" evidence="5">
    <location>
        <begin position="526"/>
        <end position="544"/>
    </location>
</feature>
<feature type="modified residue" description="N-acetylserine" evidence="1">
    <location>
        <position position="2"/>
    </location>
</feature>
<comment type="function">
    <text evidence="2">Neurofilaments usually contain three intermediate filament proteins: NEFL, NEFM, and NEFH which are involved in the maintenance of neuronal caliber. May additionally cooperate with other neuronal intermediate filament proteins to form neuronal filamentous networks (By similarity).</text>
</comment>
<comment type="subunit">
    <text evidence="3">Forms homodimers (in vitro).</text>
</comment>
<comment type="subcellular location">
    <subcellularLocation>
        <location evidence="2">Cell projection</location>
        <location evidence="2">Axon</location>
    </subcellularLocation>
    <subcellularLocation>
        <location evidence="2">Cytoplasm</location>
        <location evidence="2">Cytoskeleton</location>
    </subcellularLocation>
</comment>
<comment type="miscellaneous">
    <text>NF-L is the most abundant of the three neurofilament proteins and, as the other nonepithelial intermediate filament proteins, it can form homomeric 10-nm filaments.</text>
</comment>
<comment type="similarity">
    <text evidence="4">Belongs to the intermediate filament family.</text>
</comment>
<evidence type="ECO:0000250" key="1"/>
<evidence type="ECO:0000250" key="2">
    <source>
        <dbReference type="UniProtKB" id="P08551"/>
    </source>
</evidence>
<evidence type="ECO:0000250" key="3">
    <source>
        <dbReference type="UniProtKB" id="P19527"/>
    </source>
</evidence>
<evidence type="ECO:0000255" key="4">
    <source>
        <dbReference type="PROSITE-ProRule" id="PRU01188"/>
    </source>
</evidence>
<evidence type="ECO:0000256" key="5">
    <source>
        <dbReference type="SAM" id="MobiDB-lite"/>
    </source>
</evidence>
<organism>
    <name type="scientific">Xenopus laevis</name>
    <name type="common">African clawed frog</name>
    <dbReference type="NCBI Taxonomy" id="8355"/>
    <lineage>
        <taxon>Eukaryota</taxon>
        <taxon>Metazoa</taxon>
        <taxon>Chordata</taxon>
        <taxon>Craniata</taxon>
        <taxon>Vertebrata</taxon>
        <taxon>Euteleostomi</taxon>
        <taxon>Amphibia</taxon>
        <taxon>Batrachia</taxon>
        <taxon>Anura</taxon>
        <taxon>Pipoidea</taxon>
        <taxon>Pipidae</taxon>
        <taxon>Xenopodinae</taxon>
        <taxon>Xenopus</taxon>
        <taxon>Xenopus</taxon>
    </lineage>
</organism>
<name>NFL_XENLA</name>